<dbReference type="EC" id="2.7.7.7"/>
<dbReference type="EMBL" id="BA000034">
    <property type="protein sequence ID" value="BAC64208.1"/>
    <property type="molecule type" value="Genomic_DNA"/>
</dbReference>
<dbReference type="RefSeq" id="WP_011054545.1">
    <property type="nucleotide sequence ID" value="NC_004606.1"/>
</dbReference>
<dbReference type="SMR" id="P0DA75"/>
<dbReference type="KEGG" id="sps:SPs1113"/>
<dbReference type="HOGENOM" id="CLU_001600_0_0_9"/>
<dbReference type="GO" id="GO:0005737">
    <property type="term" value="C:cytoplasm"/>
    <property type="evidence" value="ECO:0007669"/>
    <property type="project" value="UniProtKB-SubCell"/>
</dbReference>
<dbReference type="GO" id="GO:0008408">
    <property type="term" value="F:3'-5' exonuclease activity"/>
    <property type="evidence" value="ECO:0007669"/>
    <property type="project" value="InterPro"/>
</dbReference>
<dbReference type="GO" id="GO:0003887">
    <property type="term" value="F:DNA-directed DNA polymerase activity"/>
    <property type="evidence" value="ECO:0007669"/>
    <property type="project" value="UniProtKB-KW"/>
</dbReference>
<dbReference type="GO" id="GO:0003676">
    <property type="term" value="F:nucleic acid binding"/>
    <property type="evidence" value="ECO:0007669"/>
    <property type="project" value="InterPro"/>
</dbReference>
<dbReference type="GO" id="GO:0006260">
    <property type="term" value="P:DNA replication"/>
    <property type="evidence" value="ECO:0007669"/>
    <property type="project" value="UniProtKB-KW"/>
</dbReference>
<dbReference type="CDD" id="cd04485">
    <property type="entry name" value="DnaE_OBF"/>
    <property type="match status" value="1"/>
</dbReference>
<dbReference type="CDD" id="cd07431">
    <property type="entry name" value="PHP_PolIIIA"/>
    <property type="match status" value="1"/>
</dbReference>
<dbReference type="Gene3D" id="1.10.150.870">
    <property type="match status" value="1"/>
</dbReference>
<dbReference type="Gene3D" id="1.10.10.1600">
    <property type="entry name" value="Bacterial DNA polymerase III alpha subunit, thumb domain"/>
    <property type="match status" value="1"/>
</dbReference>
<dbReference type="Gene3D" id="3.20.20.140">
    <property type="entry name" value="Metal-dependent hydrolases"/>
    <property type="match status" value="1"/>
</dbReference>
<dbReference type="Gene3D" id="2.40.50.140">
    <property type="entry name" value="Nucleic acid-binding proteins"/>
    <property type="match status" value="1"/>
</dbReference>
<dbReference type="InterPro" id="IPR011708">
    <property type="entry name" value="DNA_pol3_alpha_NTPase_dom"/>
</dbReference>
<dbReference type="InterPro" id="IPR041931">
    <property type="entry name" value="DNA_pol3_alpha_thumb_dom"/>
</dbReference>
<dbReference type="InterPro" id="IPR040982">
    <property type="entry name" value="DNA_pol3_finger"/>
</dbReference>
<dbReference type="InterPro" id="IPR004805">
    <property type="entry name" value="DnaE2/DnaE/PolC"/>
</dbReference>
<dbReference type="InterPro" id="IPR029460">
    <property type="entry name" value="DNAPol_HHH"/>
</dbReference>
<dbReference type="InterPro" id="IPR012340">
    <property type="entry name" value="NA-bd_OB-fold"/>
</dbReference>
<dbReference type="InterPro" id="IPR004365">
    <property type="entry name" value="NA-bd_OB_tRNA"/>
</dbReference>
<dbReference type="InterPro" id="IPR004013">
    <property type="entry name" value="PHP_dom"/>
</dbReference>
<dbReference type="InterPro" id="IPR003141">
    <property type="entry name" value="Pol/His_phosphatase_N"/>
</dbReference>
<dbReference type="InterPro" id="IPR016195">
    <property type="entry name" value="Pol/histidinol_Pase-like"/>
</dbReference>
<dbReference type="NCBIfam" id="TIGR00594">
    <property type="entry name" value="polc"/>
    <property type="match status" value="1"/>
</dbReference>
<dbReference type="NCBIfam" id="NF005582">
    <property type="entry name" value="PRK07279.1"/>
    <property type="match status" value="1"/>
</dbReference>
<dbReference type="PANTHER" id="PTHR32294">
    <property type="entry name" value="DNA POLYMERASE III SUBUNIT ALPHA"/>
    <property type="match status" value="1"/>
</dbReference>
<dbReference type="PANTHER" id="PTHR32294:SF0">
    <property type="entry name" value="DNA POLYMERASE III SUBUNIT ALPHA"/>
    <property type="match status" value="1"/>
</dbReference>
<dbReference type="Pfam" id="PF07733">
    <property type="entry name" value="DNA_pol3_alpha"/>
    <property type="match status" value="1"/>
</dbReference>
<dbReference type="Pfam" id="PF17657">
    <property type="entry name" value="DNA_pol3_finger"/>
    <property type="match status" value="1"/>
</dbReference>
<dbReference type="Pfam" id="PF14579">
    <property type="entry name" value="HHH_6"/>
    <property type="match status" value="1"/>
</dbReference>
<dbReference type="Pfam" id="PF02811">
    <property type="entry name" value="PHP"/>
    <property type="match status" value="1"/>
</dbReference>
<dbReference type="Pfam" id="PF01336">
    <property type="entry name" value="tRNA_anti-codon"/>
    <property type="match status" value="1"/>
</dbReference>
<dbReference type="SMART" id="SM00481">
    <property type="entry name" value="POLIIIAc"/>
    <property type="match status" value="1"/>
</dbReference>
<dbReference type="SUPFAM" id="SSF89550">
    <property type="entry name" value="PHP domain-like"/>
    <property type="match status" value="1"/>
</dbReference>
<protein>
    <recommendedName>
        <fullName>DNA polymerase III subunit alpha</fullName>
        <ecNumber>2.7.7.7</ecNumber>
    </recommendedName>
</protein>
<sequence length="1036" mass="119153">MFAQLDTKTVYSFMDSLIDLNHYFERAKQFGYHTIGIMDKDNLYGAYHFIKGCQKNGLQPVLGLEVEILYQERQVLLNLIAQNTQGYHQLLKISTAKMSGKLHMDYLCQHLEGIAVIIPSKGWSDTLVVPFDYYIGVDQYTDLSHMDSKRQLIPLRTVRYFAQDDMETLHMLHAIRDNLSLAETPVVESDQELTDCQQLTTFYQTHCPQALQNLEDLVSGIYYDFDTNLKLPHFNRDKSAKQELQELTEAGLKEKGLWKEPYQSRLLHELVIISDMGFDDYFLIVWDLLRFGRSKGYYMGMGRGSAAGSLVAYALNITGIDPVQHDLLFERFLNKERYSMPDIDIDLPDIYRSEFLRYVRNRYGSDHSAQIVTFSTFGPKQAIRDVFKRFGVPEYELTNLTKKIGFKDSLATVYEKSISFRQVINSRTEFQKAFAIAKRIEGNPRQTSIHAAGIVMSDDTLTNHIPLKSGDDMMITQYDAHAIEANGLLKMDFLGLRNLTFVQKMQEKVAKDYGCQIDIAAIDLEDPQTLALFAKGDTKGIFQFEQNGAINLLKRIKPQRFEEIVATTSLNRPGASDYTTNFIKRREGQEKIDLIDPVIAPILEPTYGIMLYQEQVMQIAQIYAGFTLGKADLLRRAMSKKNLQEMQKMEEDFIASAKHLGRAEETARGLFKRMEKFAGYGFNRSHAFAYSALAFQLAYFKAHYPAVFYDIMMNYSSSDYITDALESDFQVAQVTINSIPYTDKIEASKIYMGLKNIKGLPRDFAYWIIEQRPFNSVEDFLTRTPEKYQKKVFLEPLIKIGLFDCFEPNRKKILDNLDGLLVFVNELGSLFSDSSFSWVDAKDYSATEKYSLEQEIVGVGMSKHPLIDIAEKSTQTFTPISQLVKESEAVVLIQIDSIRIIRTKTSGQQMAFLSVNDTKKKLDVTLFPQEYAIYKDQLIEGEFYYLKGRIKERDHRLQMVCQQVQMAISQKYWLLVENHQFDSQISEILGAFPGTTPVVIHYQKNKETIALTKIQVHVTENLKEKLRPFVLKTVFR</sequence>
<organism>
    <name type="scientific">Streptococcus pyogenes serotype M3 (strain SSI-1)</name>
    <dbReference type="NCBI Taxonomy" id="193567"/>
    <lineage>
        <taxon>Bacteria</taxon>
        <taxon>Bacillati</taxon>
        <taxon>Bacillota</taxon>
        <taxon>Bacilli</taxon>
        <taxon>Lactobacillales</taxon>
        <taxon>Streptococcaceae</taxon>
        <taxon>Streptococcus</taxon>
    </lineage>
</organism>
<accession>P0DA75</accession>
<accession>Q8K7A1</accession>
<reference key="1">
    <citation type="journal article" date="2003" name="Genome Res.">
        <title>Genome sequence of an M3 strain of Streptococcus pyogenes reveals a large-scale genomic rearrangement in invasive strains and new insights into phage evolution.</title>
        <authorList>
            <person name="Nakagawa I."/>
            <person name="Kurokawa K."/>
            <person name="Yamashita A."/>
            <person name="Nakata M."/>
            <person name="Tomiyasu Y."/>
            <person name="Okahashi N."/>
            <person name="Kawabata S."/>
            <person name="Yamazaki K."/>
            <person name="Shiba T."/>
            <person name="Yasunaga T."/>
            <person name="Hayashi H."/>
            <person name="Hattori M."/>
            <person name="Hamada S."/>
        </authorList>
    </citation>
    <scope>NUCLEOTIDE SEQUENCE [LARGE SCALE GENOMIC DNA]</scope>
    <source>
        <strain>SSI-1</strain>
    </source>
</reference>
<evidence type="ECO:0000250" key="1"/>
<evidence type="ECO:0000305" key="2"/>
<keyword id="KW-0963">Cytoplasm</keyword>
<keyword id="KW-0235">DNA replication</keyword>
<keyword id="KW-0239">DNA-directed DNA polymerase</keyword>
<keyword id="KW-0548">Nucleotidyltransferase</keyword>
<keyword id="KW-0808">Transferase</keyword>
<gene>
    <name type="primary">dnaE</name>
    <name type="ordered locus">SPs1113</name>
</gene>
<comment type="function">
    <text evidence="1">DNA polymerase III is a complex, multichain enzyme responsible for most of the replicative synthesis in bacteria. This DNA polymerase also exhibits 3' to 5' exonuclease activity. The alpha chain is the DNA polymerase (By similarity).</text>
</comment>
<comment type="catalytic activity">
    <reaction>
        <text>DNA(n) + a 2'-deoxyribonucleoside 5'-triphosphate = DNA(n+1) + diphosphate</text>
        <dbReference type="Rhea" id="RHEA:22508"/>
        <dbReference type="Rhea" id="RHEA-COMP:17339"/>
        <dbReference type="Rhea" id="RHEA-COMP:17340"/>
        <dbReference type="ChEBI" id="CHEBI:33019"/>
        <dbReference type="ChEBI" id="CHEBI:61560"/>
        <dbReference type="ChEBI" id="CHEBI:173112"/>
        <dbReference type="EC" id="2.7.7.7"/>
    </reaction>
</comment>
<comment type="subunit">
    <text evidence="1">DNA polymerase III contains a core (composed of alpha, epsilon and theta chains) that associates with a tau subunit. This core dimerizes to form the PolIII' complex. PolIII' associates with the gamma complex (composed of gamma, delta, delta', psi and chi chains) and with the beta chain to form the complete DNA polymerase III complex (By similarity).</text>
</comment>
<comment type="subcellular location">
    <subcellularLocation>
        <location evidence="1">Cytoplasm</location>
    </subcellularLocation>
</comment>
<comment type="similarity">
    <text evidence="2">Belongs to the DNA polymerase type-C family. DnaE subfamily.</text>
</comment>
<feature type="chain" id="PRO_0000411325" description="DNA polymerase III subunit alpha">
    <location>
        <begin position="1"/>
        <end position="1036"/>
    </location>
</feature>
<name>DPO3A_STRPQ</name>
<proteinExistence type="inferred from homology"/>